<feature type="chain" id="PRO_1000093254" description="Protein-L-isoaspartate O-methyltransferase">
    <location>
        <begin position="1"/>
        <end position="208"/>
    </location>
</feature>
<feature type="active site" evidence="1">
    <location>
        <position position="59"/>
    </location>
</feature>
<dbReference type="EC" id="2.1.1.77" evidence="1"/>
<dbReference type="EMBL" id="CU468135">
    <property type="protein sequence ID" value="CAO97743.1"/>
    <property type="molecule type" value="Genomic_DNA"/>
</dbReference>
<dbReference type="RefSeq" id="WP_012442401.1">
    <property type="nucleotide sequence ID" value="NC_010694.1"/>
</dbReference>
<dbReference type="SMR" id="B2VG25"/>
<dbReference type="STRING" id="465817.ETA_26970"/>
<dbReference type="KEGG" id="eta:ETA_26970"/>
<dbReference type="eggNOG" id="COG2518">
    <property type="taxonomic scope" value="Bacteria"/>
</dbReference>
<dbReference type="HOGENOM" id="CLU_055432_2_0_6"/>
<dbReference type="OrthoDB" id="9810066at2"/>
<dbReference type="Proteomes" id="UP000001726">
    <property type="component" value="Chromosome"/>
</dbReference>
<dbReference type="GO" id="GO:0005737">
    <property type="term" value="C:cytoplasm"/>
    <property type="evidence" value="ECO:0007669"/>
    <property type="project" value="UniProtKB-SubCell"/>
</dbReference>
<dbReference type="GO" id="GO:0004719">
    <property type="term" value="F:protein-L-isoaspartate (D-aspartate) O-methyltransferase activity"/>
    <property type="evidence" value="ECO:0007669"/>
    <property type="project" value="UniProtKB-UniRule"/>
</dbReference>
<dbReference type="GO" id="GO:0032259">
    <property type="term" value="P:methylation"/>
    <property type="evidence" value="ECO:0007669"/>
    <property type="project" value="UniProtKB-KW"/>
</dbReference>
<dbReference type="GO" id="GO:0036211">
    <property type="term" value="P:protein modification process"/>
    <property type="evidence" value="ECO:0007669"/>
    <property type="project" value="UniProtKB-UniRule"/>
</dbReference>
<dbReference type="GO" id="GO:0030091">
    <property type="term" value="P:protein repair"/>
    <property type="evidence" value="ECO:0007669"/>
    <property type="project" value="UniProtKB-UniRule"/>
</dbReference>
<dbReference type="CDD" id="cd02440">
    <property type="entry name" value="AdoMet_MTases"/>
    <property type="match status" value="1"/>
</dbReference>
<dbReference type="FunFam" id="3.40.50.150:FF:000010">
    <property type="entry name" value="Protein-L-isoaspartate O-methyltransferase"/>
    <property type="match status" value="1"/>
</dbReference>
<dbReference type="Gene3D" id="3.40.50.150">
    <property type="entry name" value="Vaccinia Virus protein VP39"/>
    <property type="match status" value="1"/>
</dbReference>
<dbReference type="HAMAP" id="MF_00090">
    <property type="entry name" value="PIMT"/>
    <property type="match status" value="1"/>
</dbReference>
<dbReference type="InterPro" id="IPR000682">
    <property type="entry name" value="PCMT"/>
</dbReference>
<dbReference type="InterPro" id="IPR029063">
    <property type="entry name" value="SAM-dependent_MTases_sf"/>
</dbReference>
<dbReference type="NCBIfam" id="TIGR00080">
    <property type="entry name" value="pimt"/>
    <property type="match status" value="1"/>
</dbReference>
<dbReference type="NCBIfam" id="NF001453">
    <property type="entry name" value="PRK00312.1"/>
    <property type="match status" value="1"/>
</dbReference>
<dbReference type="PANTHER" id="PTHR11579">
    <property type="entry name" value="PROTEIN-L-ISOASPARTATE O-METHYLTRANSFERASE"/>
    <property type="match status" value="1"/>
</dbReference>
<dbReference type="PANTHER" id="PTHR11579:SF0">
    <property type="entry name" value="PROTEIN-L-ISOASPARTATE(D-ASPARTATE) O-METHYLTRANSFERASE"/>
    <property type="match status" value="1"/>
</dbReference>
<dbReference type="Pfam" id="PF01135">
    <property type="entry name" value="PCMT"/>
    <property type="match status" value="1"/>
</dbReference>
<dbReference type="SUPFAM" id="SSF53335">
    <property type="entry name" value="S-adenosyl-L-methionine-dependent methyltransferases"/>
    <property type="match status" value="1"/>
</dbReference>
<dbReference type="PROSITE" id="PS01279">
    <property type="entry name" value="PCMT"/>
    <property type="match status" value="1"/>
</dbReference>
<sequence>MVSGRIETLLAQLRLQGIDDERLLKAIGDVPRERFIDEAFEHKAWENTALPIGCGQTISQPYMVAKMTSLLALTPTSRVLEIGTGSGYQTAILAHLVGHVCSVERIKGLQWQAKRRLKQLDLHNVSTRHGDGWLGWPARGPYDAIIVTAAPPNIPDALMSQLDDGGVMVLPVGEDQQVLQRIRRTADEFIVDTIEPVRFVPLVKGDLA</sequence>
<organism>
    <name type="scientific">Erwinia tasmaniensis (strain DSM 17950 / CFBP 7177 / CIP 109463 / NCPPB 4357 / Et1/99)</name>
    <dbReference type="NCBI Taxonomy" id="465817"/>
    <lineage>
        <taxon>Bacteria</taxon>
        <taxon>Pseudomonadati</taxon>
        <taxon>Pseudomonadota</taxon>
        <taxon>Gammaproteobacteria</taxon>
        <taxon>Enterobacterales</taxon>
        <taxon>Erwiniaceae</taxon>
        <taxon>Erwinia</taxon>
    </lineage>
</organism>
<protein>
    <recommendedName>
        <fullName evidence="1">Protein-L-isoaspartate O-methyltransferase</fullName>
        <ecNumber evidence="1">2.1.1.77</ecNumber>
    </recommendedName>
    <alternativeName>
        <fullName evidence="1">L-isoaspartyl protein carboxyl methyltransferase</fullName>
    </alternativeName>
    <alternativeName>
        <fullName evidence="1">Protein L-isoaspartyl methyltransferase</fullName>
    </alternativeName>
    <alternativeName>
        <fullName evidence="1">Protein-beta-aspartate methyltransferase</fullName>
        <shortName evidence="1">PIMT</shortName>
    </alternativeName>
</protein>
<gene>
    <name evidence="1" type="primary">pcm</name>
    <name type="ordered locus">ETA_26970</name>
</gene>
<name>PIMT_ERWT9</name>
<proteinExistence type="inferred from homology"/>
<evidence type="ECO:0000255" key="1">
    <source>
        <dbReference type="HAMAP-Rule" id="MF_00090"/>
    </source>
</evidence>
<reference key="1">
    <citation type="journal article" date="2008" name="Environ. Microbiol.">
        <title>The genome of Erwinia tasmaniensis strain Et1/99, a non-pathogenic bacterium in the genus Erwinia.</title>
        <authorList>
            <person name="Kube M."/>
            <person name="Migdoll A.M."/>
            <person name="Mueller I."/>
            <person name="Kuhl H."/>
            <person name="Beck A."/>
            <person name="Reinhardt R."/>
            <person name="Geider K."/>
        </authorList>
    </citation>
    <scope>NUCLEOTIDE SEQUENCE [LARGE SCALE GENOMIC DNA]</scope>
    <source>
        <strain>DSM 17950 / CFBP 7177 / CIP 109463 / NCPPB 4357 / Et1/99</strain>
    </source>
</reference>
<keyword id="KW-0963">Cytoplasm</keyword>
<keyword id="KW-0489">Methyltransferase</keyword>
<keyword id="KW-1185">Reference proteome</keyword>
<keyword id="KW-0949">S-adenosyl-L-methionine</keyword>
<keyword id="KW-0808">Transferase</keyword>
<comment type="function">
    <text evidence="1">Catalyzes the methyl esterification of L-isoaspartyl residues in peptides and proteins that result from spontaneous decomposition of normal L-aspartyl and L-asparaginyl residues. It plays a role in the repair and/or degradation of damaged proteins.</text>
</comment>
<comment type="catalytic activity">
    <reaction evidence="1">
        <text>[protein]-L-isoaspartate + S-adenosyl-L-methionine = [protein]-L-isoaspartate alpha-methyl ester + S-adenosyl-L-homocysteine</text>
        <dbReference type="Rhea" id="RHEA:12705"/>
        <dbReference type="Rhea" id="RHEA-COMP:12143"/>
        <dbReference type="Rhea" id="RHEA-COMP:12144"/>
        <dbReference type="ChEBI" id="CHEBI:57856"/>
        <dbReference type="ChEBI" id="CHEBI:59789"/>
        <dbReference type="ChEBI" id="CHEBI:90596"/>
        <dbReference type="ChEBI" id="CHEBI:90598"/>
        <dbReference type="EC" id="2.1.1.77"/>
    </reaction>
</comment>
<comment type="subcellular location">
    <subcellularLocation>
        <location evidence="1">Cytoplasm</location>
    </subcellularLocation>
</comment>
<comment type="similarity">
    <text evidence="1">Belongs to the methyltransferase superfamily. L-isoaspartyl/D-aspartyl protein methyltransferase family.</text>
</comment>
<accession>B2VG25</accession>